<protein>
    <recommendedName>
        <fullName>Negative elongation factor E</fullName>
    </recommendedName>
</protein>
<organism>
    <name type="scientific">Drosophila virilis</name>
    <name type="common">Fruit fly</name>
    <dbReference type="NCBI Taxonomy" id="7244"/>
    <lineage>
        <taxon>Eukaryota</taxon>
        <taxon>Metazoa</taxon>
        <taxon>Ecdysozoa</taxon>
        <taxon>Arthropoda</taxon>
        <taxon>Hexapoda</taxon>
        <taxon>Insecta</taxon>
        <taxon>Pterygota</taxon>
        <taxon>Neoptera</taxon>
        <taxon>Endopterygota</taxon>
        <taxon>Diptera</taxon>
        <taxon>Brachycera</taxon>
        <taxon>Muscomorpha</taxon>
        <taxon>Ephydroidea</taxon>
        <taxon>Drosophilidae</taxon>
        <taxon>Drosophila</taxon>
    </lineage>
</organism>
<accession>Q95ZE9</accession>
<dbReference type="EMBL" id="AJ306692">
    <property type="protein sequence ID" value="CAC41628.1"/>
    <property type="molecule type" value="Genomic_DNA"/>
</dbReference>
<dbReference type="SMR" id="Q95ZE9"/>
<dbReference type="eggNOG" id="ENOG502QQQ4">
    <property type="taxonomic scope" value="Eukaryota"/>
</dbReference>
<dbReference type="OrthoDB" id="378874at2759"/>
<dbReference type="GO" id="GO:0005694">
    <property type="term" value="C:chromosome"/>
    <property type="evidence" value="ECO:0007669"/>
    <property type="project" value="UniProtKB-SubCell"/>
</dbReference>
<dbReference type="GO" id="GO:0032021">
    <property type="term" value="C:NELF complex"/>
    <property type="evidence" value="ECO:0007669"/>
    <property type="project" value="EnsemblMetazoa"/>
</dbReference>
<dbReference type="GO" id="GO:0017053">
    <property type="term" value="C:transcription repressor complex"/>
    <property type="evidence" value="ECO:0000250"/>
    <property type="project" value="UniProtKB"/>
</dbReference>
<dbReference type="GO" id="GO:0003723">
    <property type="term" value="F:RNA binding"/>
    <property type="evidence" value="ECO:0000250"/>
    <property type="project" value="UniProtKB"/>
</dbReference>
<dbReference type="GO" id="GO:0000122">
    <property type="term" value="P:negative regulation of transcription by RNA polymerase II"/>
    <property type="evidence" value="ECO:0000250"/>
    <property type="project" value="UniProtKB"/>
</dbReference>
<dbReference type="GO" id="GO:0034244">
    <property type="term" value="P:negative regulation of transcription elongation by RNA polymerase II"/>
    <property type="evidence" value="ECO:0007669"/>
    <property type="project" value="EnsemblMetazoa"/>
</dbReference>
<dbReference type="GO" id="GO:0045944">
    <property type="term" value="P:positive regulation of transcription by RNA polymerase II"/>
    <property type="evidence" value="ECO:0007669"/>
    <property type="project" value="EnsemblMetazoa"/>
</dbReference>
<dbReference type="FunFam" id="3.30.70.330:FF:000448">
    <property type="entry name" value="Negative elongation factor E"/>
    <property type="match status" value="1"/>
</dbReference>
<dbReference type="Gene3D" id="3.30.70.330">
    <property type="match status" value="1"/>
</dbReference>
<dbReference type="InterPro" id="IPR033102">
    <property type="entry name" value="NELFE"/>
</dbReference>
<dbReference type="InterPro" id="IPR012677">
    <property type="entry name" value="Nucleotide-bd_a/b_plait_sf"/>
</dbReference>
<dbReference type="InterPro" id="IPR035979">
    <property type="entry name" value="RBD_domain_sf"/>
</dbReference>
<dbReference type="InterPro" id="IPR000504">
    <property type="entry name" value="RRM_dom"/>
</dbReference>
<dbReference type="PANTHER" id="PTHR17250">
    <property type="entry name" value="NEGATIVE ELONGATION FACTOR E"/>
    <property type="match status" value="1"/>
</dbReference>
<dbReference type="PANTHER" id="PTHR17250:SF0">
    <property type="entry name" value="NEGATIVE ELONGATION FACTOR E"/>
    <property type="match status" value="1"/>
</dbReference>
<dbReference type="Pfam" id="PF00076">
    <property type="entry name" value="RRM_1"/>
    <property type="match status" value="1"/>
</dbReference>
<dbReference type="SMART" id="SM00360">
    <property type="entry name" value="RRM"/>
    <property type="match status" value="1"/>
</dbReference>
<dbReference type="SUPFAM" id="SSF54928">
    <property type="entry name" value="RNA-binding domain, RBD"/>
    <property type="match status" value="1"/>
</dbReference>
<dbReference type="PROSITE" id="PS50102">
    <property type="entry name" value="RRM"/>
    <property type="match status" value="1"/>
</dbReference>
<evidence type="ECO:0000250" key="1"/>
<evidence type="ECO:0000255" key="2">
    <source>
        <dbReference type="PROSITE-ProRule" id="PRU00176"/>
    </source>
</evidence>
<evidence type="ECO:0000256" key="3">
    <source>
        <dbReference type="SAM" id="MobiDB-lite"/>
    </source>
</evidence>
<evidence type="ECO:0000305" key="4"/>
<sequence length="281" mass="31858">MVYIHFPNNLTEEEHMLQAKYQKLKKKKKALQAHKAPKQEPESALTLKRPTDARDAREVARKLIKSGAIPAIQKQQTKQDQTSFKRPKGQERAKRSTSETTVAAYQPFSSTQNDVAQETIISEIIKEEPRRQNLYQHFATERVREERGLTEKVTLDTTQPEKPRAGNTIFVSGNKVTEEFLKKTFNDYGTIVNVSMEIEKSRGFVSFAKPESADRAIAEMHGKSVTGIVLQVQLARRQPQIVPINDASSSAVWSSIAASKSQKGSHKDLRQMVQYNDDFLM</sequence>
<reference key="1">
    <citation type="journal article" date="2002" name="Gene">
        <title>Conservation of gene order, structure and sequence between three closely linked genes in Drosophila melanogaster and Drosophila virilis.</title>
        <authorList>
            <person name="Lyamouri M."/>
            <person name="Enerly E."/>
            <person name="Kress H."/>
            <person name="Lambertsson A."/>
        </authorList>
    </citation>
    <scope>NUCLEOTIDE SEQUENCE [GENOMIC DNA]</scope>
</reference>
<comment type="function">
    <text evidence="1">Essential component of the NELF complex, a complex that negatively regulates the elongation of transcription by RNA polymerase II by RNA polymerase II. The NELF complex, which acts via an association with the DSIF complex, causes transcriptional pausing (By similarity).</text>
</comment>
<comment type="subunit">
    <text evidence="1">Component of the NELF complex, which is at least composed of TH1/NELF-D and NELF-E.</text>
</comment>
<comment type="subcellular location">
    <subcellularLocation>
        <location evidence="1">Nucleus</location>
    </subcellularLocation>
    <subcellularLocation>
        <location evidence="1">Chromosome</location>
    </subcellularLocation>
    <text evidence="1">Associates with polytene chromosomes. Associates with the hsp70 promoter when it is inactive, but not when it is activated. The NELF complex possibly dissociates from chromatin following phosphorylation of RNA polymerase II (By similarity).</text>
</comment>
<comment type="similarity">
    <text evidence="4">Belongs to the RRM NELF-E family.</text>
</comment>
<feature type="chain" id="PRO_0000081805" description="Negative elongation factor E">
    <location>
        <begin position="1"/>
        <end position="281"/>
    </location>
</feature>
<feature type="domain" description="RRM" evidence="2">
    <location>
        <begin position="167"/>
        <end position="237"/>
    </location>
</feature>
<feature type="region of interest" description="Disordered" evidence="3">
    <location>
        <begin position="25"/>
        <end position="109"/>
    </location>
</feature>
<feature type="compositionally biased region" description="Basic residues" evidence="3">
    <location>
        <begin position="25"/>
        <end position="36"/>
    </location>
</feature>
<feature type="compositionally biased region" description="Basic and acidic residues" evidence="3">
    <location>
        <begin position="49"/>
        <end position="61"/>
    </location>
</feature>
<feature type="compositionally biased region" description="Polar residues" evidence="3">
    <location>
        <begin position="73"/>
        <end position="84"/>
    </location>
</feature>
<feature type="compositionally biased region" description="Basic and acidic residues" evidence="3">
    <location>
        <begin position="88"/>
        <end position="97"/>
    </location>
</feature>
<feature type="compositionally biased region" description="Polar residues" evidence="3">
    <location>
        <begin position="98"/>
        <end position="109"/>
    </location>
</feature>
<proteinExistence type="inferred from homology"/>
<name>NELFE_DROVI</name>
<gene>
    <name type="primary">Nelf-E</name>
    <name type="synonym">anon-66Da</name>
    <name type="ORF">CG5994</name>
</gene>
<keyword id="KW-0158">Chromosome</keyword>
<keyword id="KW-0539">Nucleus</keyword>
<keyword id="KW-0678">Repressor</keyword>
<keyword id="KW-0694">RNA-binding</keyword>
<keyword id="KW-0804">Transcription</keyword>
<keyword id="KW-0805">Transcription regulation</keyword>